<accession>D0NK98</accession>
<evidence type="ECO:0000255" key="1"/>
<evidence type="ECO:0000269" key="2">
    <source>
    </source>
</evidence>
<evidence type="ECO:0000269" key="3">
    <source>
    </source>
</evidence>
<evidence type="ECO:0000269" key="4">
    <source>
    </source>
</evidence>
<evidence type="ECO:0000303" key="5">
    <source>
    </source>
</evidence>
<evidence type="ECO:0000305" key="6"/>
<evidence type="ECO:0000305" key="7">
    <source>
    </source>
</evidence>
<organism>
    <name type="scientific">Phytophthora infestans (strain T30-4)</name>
    <name type="common">Potato late blight agent</name>
    <dbReference type="NCBI Taxonomy" id="403677"/>
    <lineage>
        <taxon>Eukaryota</taxon>
        <taxon>Sar</taxon>
        <taxon>Stramenopiles</taxon>
        <taxon>Oomycota</taxon>
        <taxon>Peronosporales</taxon>
        <taxon>Peronosporaceae</taxon>
        <taxon>Phytophthora</taxon>
    </lineage>
</organism>
<keyword id="KW-1035">Host cytoplasm</keyword>
<keyword id="KW-1048">Host nucleus</keyword>
<keyword id="KW-1185">Reference proteome</keyword>
<keyword id="KW-0964">Secreted</keyword>
<keyword id="KW-0732">Signal</keyword>
<keyword id="KW-0843">Virulence</keyword>
<name>RXLRM_PHYIT</name>
<reference key="1">
    <citation type="journal article" date="2009" name="Nature">
        <title>Genome sequence and analysis of the Irish potato famine pathogen Phytophthora infestans.</title>
        <authorList>
            <consortium name="The Broad Institute Genome Sequencing Platform"/>
            <person name="Haas B.J."/>
            <person name="Kamoun S."/>
            <person name="Zody M.C."/>
            <person name="Jiang R.H."/>
            <person name="Handsaker R.E."/>
            <person name="Cano L.M."/>
            <person name="Grabherr M."/>
            <person name="Kodira C.D."/>
            <person name="Raffaele S."/>
            <person name="Torto-Alalibo T."/>
            <person name="Bozkurt T.O."/>
            <person name="Ah-Fong A.M."/>
            <person name="Alvarado L."/>
            <person name="Anderson V.L."/>
            <person name="Armstrong M.R."/>
            <person name="Avrova A."/>
            <person name="Baxter L."/>
            <person name="Beynon J."/>
            <person name="Boevink P.C."/>
            <person name="Bollmann S.R."/>
            <person name="Bos J.I."/>
            <person name="Bulone V."/>
            <person name="Cai G."/>
            <person name="Cakir C."/>
            <person name="Carrington J.C."/>
            <person name="Chawner M."/>
            <person name="Conti L."/>
            <person name="Costanzo S."/>
            <person name="Ewan R."/>
            <person name="Fahlgren N."/>
            <person name="Fischbach M.A."/>
            <person name="Fugelstad J."/>
            <person name="Gilroy E.M."/>
            <person name="Gnerre S."/>
            <person name="Green P.J."/>
            <person name="Grenville-Briggs L.J."/>
            <person name="Griffith J."/>
            <person name="Grunwald N.J."/>
            <person name="Horn K."/>
            <person name="Horner N.R."/>
            <person name="Hu C.H."/>
            <person name="Huitema E."/>
            <person name="Jeong D.H."/>
            <person name="Jones A.M."/>
            <person name="Jones J.D."/>
            <person name="Jones R.W."/>
            <person name="Karlsson E.K."/>
            <person name="Kunjeti S.G."/>
            <person name="Lamour K."/>
            <person name="Liu Z."/>
            <person name="Ma L."/>
            <person name="Maclean D."/>
            <person name="Chibucos M.C."/>
            <person name="McDonald H."/>
            <person name="McWalters J."/>
            <person name="Meijer H.J."/>
            <person name="Morgan W."/>
            <person name="Morris P.F."/>
            <person name="Munro C.A."/>
            <person name="O'Neill K."/>
            <person name="Ospina-Giraldo M."/>
            <person name="Pinzon A."/>
            <person name="Pritchard L."/>
            <person name="Ramsahoye B."/>
            <person name="Ren Q."/>
            <person name="Restrepo S."/>
            <person name="Roy S."/>
            <person name="Sadanandom A."/>
            <person name="Savidor A."/>
            <person name="Schornack S."/>
            <person name="Schwartz D.C."/>
            <person name="Schumann U.D."/>
            <person name="Schwessinger B."/>
            <person name="Seyer L."/>
            <person name="Sharpe T."/>
            <person name="Silvar C."/>
            <person name="Song J."/>
            <person name="Studholme D.J."/>
            <person name="Sykes S."/>
            <person name="Thines M."/>
            <person name="van de Vondervoort P.J."/>
            <person name="Phuntumart V."/>
            <person name="Wawra S."/>
            <person name="Weide R."/>
            <person name="Win J."/>
            <person name="Young C."/>
            <person name="Zhou S."/>
            <person name="Fry W."/>
            <person name="Meyers B.C."/>
            <person name="van West P."/>
            <person name="Ristaino J."/>
            <person name="Govers F."/>
            <person name="Birch P.R."/>
            <person name="Whisson S.C."/>
            <person name="Judelson H.S."/>
            <person name="Nusbaum C."/>
        </authorList>
    </citation>
    <scope>NUCLEOTIDE SEQUENCE [LARGE SCALE GENOMIC DNA]</scope>
    <scope>INDUCTION</scope>
    <scope>DOMAIN</scope>
    <source>
        <strain>T30-4</strain>
    </source>
</reference>
<reference key="2">
    <citation type="journal article" date="2017" name="BMC Genomics">
        <title>RNA-seq of life stages of the oomycete Phytophthora infestans reveals dynamic changes in metabolic, signal transduction, and pathogenesis genes and a major role for calcium signaling in development.</title>
        <authorList>
            <person name="Ah-Fong A.M."/>
            <person name="Kim K.S."/>
            <person name="Judelson H.S."/>
        </authorList>
    </citation>
    <scope>INDUCTION</scope>
</reference>
<reference key="3">
    <citation type="journal article" date="2019" name="J. Exp. Bot.">
        <title>Phytophthora infestans RXLR effectors act in concert at diverse subcellular locations to enhance host colonization.</title>
        <authorList>
            <person name="Wang S."/>
            <person name="McLellan H."/>
            <person name="Bukharova T."/>
            <person name="He Q."/>
            <person name="Murphy F."/>
            <person name="Shi J."/>
            <person name="Sun S."/>
            <person name="van Weymers P."/>
            <person name="Ren Y."/>
            <person name="Thilliez G."/>
            <person name="Wang H."/>
            <person name="Chen X."/>
            <person name="Engelhardt S."/>
            <person name="Vleeshouwers V."/>
            <person name="Gilroy E.M."/>
            <person name="Whisson S.C."/>
            <person name="Hein I."/>
            <person name="Wang X."/>
            <person name="Tian Z."/>
            <person name="Birch P.R.J."/>
            <person name="Boevink P.C."/>
        </authorList>
    </citation>
    <scope>FUNCTION</scope>
    <scope>SUBCELLULAR LOCATION</scope>
</reference>
<sequence length="154" mass="17548">MRVYFILILAVATVSGATSEMLSFQNAIQSSGGAKIETSAGRLLRAELTTDETYPEERTSLAAVEKLNAKTKDVLKDKWDAANVKYQSPFIYNDGIGQSIMKRNIDPDKVFKYLTQQKLDRTIGENPQYGLWKAYLELWKKNHPRWKSKLQTVD</sequence>
<gene>
    <name type="ORF">PITG_13093</name>
</gene>
<proteinExistence type="evidence at transcript level"/>
<protein>
    <recommendedName>
        <fullName evidence="5">RxLR effector protein PITG_12737</fullName>
    </recommendedName>
</protein>
<comment type="function">
    <text evidence="4">Effector that enhances P.infestans colonization of Nicotiana benthamiana leaves.</text>
</comment>
<comment type="subcellular location">
    <subcellularLocation>
        <location evidence="4">Secreted</location>
    </subcellularLocation>
    <subcellularLocation>
        <location evidence="4">Host nucleus</location>
    </subcellularLocation>
    <subcellularLocation>
        <location evidence="4">Host cytoplasm</location>
    </subcellularLocation>
</comment>
<comment type="induction">
    <text evidence="2 3">Expression is induced during host plant infection.</text>
</comment>
<comment type="domain">
    <text evidence="7">The RxLR-dEER motif acts to carry the protein into the host cell cytoplasm through binding to cell surface phosphatidylinositol-3-phosphate.</text>
</comment>
<comment type="similarity">
    <text evidence="6">Belongs to the RxLR effector family.</text>
</comment>
<dbReference type="EMBL" id="DS028142">
    <property type="protein sequence ID" value="EEY59935.1"/>
    <property type="molecule type" value="Genomic_DNA"/>
</dbReference>
<dbReference type="RefSeq" id="XP_002900620.1">
    <property type="nucleotide sequence ID" value="XM_002900574.1"/>
</dbReference>
<dbReference type="EnsemblProtists" id="PITG_13093T0">
    <property type="protein sequence ID" value="PITG_13093T0"/>
    <property type="gene ID" value="PITG_13093"/>
</dbReference>
<dbReference type="GeneID" id="9472912"/>
<dbReference type="KEGG" id="pif:PITG_13093"/>
<dbReference type="VEuPathDB" id="FungiDB:PITG_13093"/>
<dbReference type="eggNOG" id="ENOG502R8IY">
    <property type="taxonomic scope" value="Eukaryota"/>
</dbReference>
<dbReference type="HOGENOM" id="CLU_137088_0_0_1"/>
<dbReference type="InParanoid" id="D0NK98"/>
<dbReference type="OMA" id="TTDETYP"/>
<dbReference type="OrthoDB" id="108362at2759"/>
<dbReference type="Proteomes" id="UP000006643">
    <property type="component" value="Partially assembled WGS sequence"/>
</dbReference>
<dbReference type="GO" id="GO:0005576">
    <property type="term" value="C:extracellular region"/>
    <property type="evidence" value="ECO:0007669"/>
    <property type="project" value="UniProtKB-SubCell"/>
</dbReference>
<dbReference type="GO" id="GO:0030430">
    <property type="term" value="C:host cell cytoplasm"/>
    <property type="evidence" value="ECO:0007669"/>
    <property type="project" value="UniProtKB-SubCell"/>
</dbReference>
<dbReference type="GO" id="GO:0042025">
    <property type="term" value="C:host cell nucleus"/>
    <property type="evidence" value="ECO:0007669"/>
    <property type="project" value="UniProtKB-SubCell"/>
</dbReference>
<feature type="signal peptide" evidence="1">
    <location>
        <begin position="1"/>
        <end position="16"/>
    </location>
</feature>
<feature type="chain" id="PRO_5003012524" description="RxLR effector protein PITG_12737">
    <location>
        <begin position="17"/>
        <end position="154"/>
    </location>
</feature>
<feature type="short sequence motif" description="RxLR-dEER" evidence="7">
    <location>
        <begin position="42"/>
        <end position="58"/>
    </location>
</feature>